<feature type="chain" id="PRO_0000046925" description="Transcription factor Ken">
    <location>
        <begin position="1"/>
        <end position="601"/>
    </location>
</feature>
<feature type="domain" description="BTB" evidence="1">
    <location>
        <begin position="33"/>
        <end position="101"/>
    </location>
</feature>
<feature type="zinc finger region" description="C2H2-type 1" evidence="2">
    <location>
        <begin position="500"/>
        <end position="522"/>
    </location>
</feature>
<feature type="zinc finger region" description="C2H2-type 2" evidence="2">
    <location>
        <begin position="528"/>
        <end position="551"/>
    </location>
</feature>
<feature type="zinc finger region" description="C2H2-type 3" evidence="2">
    <location>
        <begin position="567"/>
        <end position="590"/>
    </location>
</feature>
<feature type="region of interest" description="Disordered" evidence="3">
    <location>
        <begin position="188"/>
        <end position="276"/>
    </location>
</feature>
<feature type="region of interest" description="Disordered" evidence="3">
    <location>
        <begin position="331"/>
        <end position="365"/>
    </location>
</feature>
<feature type="region of interest" description="Disordered" evidence="3">
    <location>
        <begin position="471"/>
        <end position="491"/>
    </location>
</feature>
<feature type="compositionally biased region" description="Basic and acidic residues" evidence="3">
    <location>
        <begin position="190"/>
        <end position="200"/>
    </location>
</feature>
<feature type="compositionally biased region" description="Basic and acidic residues" evidence="3">
    <location>
        <begin position="207"/>
        <end position="216"/>
    </location>
</feature>
<feature type="compositionally biased region" description="Polar residues" evidence="3">
    <location>
        <begin position="223"/>
        <end position="234"/>
    </location>
</feature>
<feature type="compositionally biased region" description="Low complexity" evidence="3">
    <location>
        <begin position="235"/>
        <end position="247"/>
    </location>
</feature>
<feature type="compositionally biased region" description="Basic residues" evidence="3">
    <location>
        <begin position="248"/>
        <end position="258"/>
    </location>
</feature>
<feature type="compositionally biased region" description="Low complexity" evidence="3">
    <location>
        <begin position="259"/>
        <end position="275"/>
    </location>
</feature>
<feature type="compositionally biased region" description="Low complexity" evidence="3">
    <location>
        <begin position="476"/>
        <end position="490"/>
    </location>
</feature>
<proteinExistence type="evidence at protein level"/>
<keyword id="KW-0217">Developmental protein</keyword>
<keyword id="KW-0238">DNA-binding</keyword>
<keyword id="KW-0479">Metal-binding</keyword>
<keyword id="KW-0539">Nucleus</keyword>
<keyword id="KW-1185">Reference proteome</keyword>
<keyword id="KW-0677">Repeat</keyword>
<keyword id="KW-0678">Repressor</keyword>
<keyword id="KW-0804">Transcription</keyword>
<keyword id="KW-0805">Transcription regulation</keyword>
<keyword id="KW-0862">Zinc</keyword>
<keyword id="KW-0863">Zinc-finger</keyword>
<evidence type="ECO:0000255" key="1">
    <source>
        <dbReference type="PROSITE-ProRule" id="PRU00037"/>
    </source>
</evidence>
<evidence type="ECO:0000255" key="2">
    <source>
        <dbReference type="PROSITE-ProRule" id="PRU00042"/>
    </source>
</evidence>
<evidence type="ECO:0000256" key="3">
    <source>
        <dbReference type="SAM" id="MobiDB-lite"/>
    </source>
</evidence>
<evidence type="ECO:0000269" key="4">
    <source>
    </source>
</evidence>
<evidence type="ECO:0000269" key="5">
    <source>
    </source>
</evidence>
<evidence type="ECO:0000269" key="6">
    <source>
    </source>
</evidence>
<evidence type="ECO:0000305" key="7"/>
<protein>
    <recommendedName>
        <fullName>Transcription factor Ken</fullName>
    </recommendedName>
    <alternativeName>
        <fullName>Protein Ken and Barbie</fullName>
    </alternativeName>
</protein>
<organism>
    <name type="scientific">Drosophila melanogaster</name>
    <name type="common">Fruit fly</name>
    <dbReference type="NCBI Taxonomy" id="7227"/>
    <lineage>
        <taxon>Eukaryota</taxon>
        <taxon>Metazoa</taxon>
        <taxon>Ecdysozoa</taxon>
        <taxon>Arthropoda</taxon>
        <taxon>Hexapoda</taxon>
        <taxon>Insecta</taxon>
        <taxon>Pterygota</taxon>
        <taxon>Neoptera</taxon>
        <taxon>Endopterygota</taxon>
        <taxon>Diptera</taxon>
        <taxon>Brachycera</taxon>
        <taxon>Muscomorpha</taxon>
        <taxon>Ephydroidea</taxon>
        <taxon>Drosophilidae</taxon>
        <taxon>Drosophila</taxon>
        <taxon>Sophophora</taxon>
    </lineage>
</organism>
<dbReference type="EMBL" id="AJ012576">
    <property type="protein sequence ID" value="CAA10062.1"/>
    <property type="molecule type" value="mRNA"/>
</dbReference>
<dbReference type="EMBL" id="AB010260">
    <property type="protein sequence ID" value="BAA32683.1"/>
    <property type="molecule type" value="mRNA"/>
</dbReference>
<dbReference type="EMBL" id="AB010261">
    <property type="protein sequence ID" value="BAA32687.1"/>
    <property type="molecule type" value="Genomic_DNA"/>
</dbReference>
<dbReference type="EMBL" id="AE013599">
    <property type="protein sequence ID" value="AAF47084.1"/>
    <property type="molecule type" value="Genomic_DNA"/>
</dbReference>
<dbReference type="EMBL" id="AF181647">
    <property type="protein sequence ID" value="AAD55433.1"/>
    <property type="molecule type" value="mRNA"/>
</dbReference>
<dbReference type="PIR" id="T00119">
    <property type="entry name" value="T00119"/>
</dbReference>
<dbReference type="RefSeq" id="NP_523833.1">
    <property type="nucleotide sequence ID" value="NM_079109.3"/>
</dbReference>
<dbReference type="SMR" id="O77459"/>
<dbReference type="BioGRID" id="63378">
    <property type="interactions" value="12"/>
</dbReference>
<dbReference type="DIP" id="DIP-22018N"/>
<dbReference type="FunCoup" id="O77459">
    <property type="interactions" value="600"/>
</dbReference>
<dbReference type="IntAct" id="O77459">
    <property type="interactions" value="3"/>
</dbReference>
<dbReference type="STRING" id="7227.FBpp0072038"/>
<dbReference type="PaxDb" id="7227-FBpp0072038"/>
<dbReference type="EnsemblMetazoa" id="FBtr0072129">
    <property type="protein sequence ID" value="FBpp0072038"/>
    <property type="gene ID" value="FBgn0011236"/>
</dbReference>
<dbReference type="GeneID" id="37785"/>
<dbReference type="KEGG" id="dme:Dmel_CG5575"/>
<dbReference type="AGR" id="FB:FBgn0011236"/>
<dbReference type="CTD" id="37785"/>
<dbReference type="FlyBase" id="FBgn0011236">
    <property type="gene designation" value="ken"/>
</dbReference>
<dbReference type="VEuPathDB" id="VectorBase:FBgn0011236"/>
<dbReference type="eggNOG" id="KOG1721">
    <property type="taxonomic scope" value="Eukaryota"/>
</dbReference>
<dbReference type="HOGENOM" id="CLU_019233_0_0_1"/>
<dbReference type="InParanoid" id="O77459"/>
<dbReference type="OMA" id="QQFVYQW"/>
<dbReference type="OrthoDB" id="8117402at2759"/>
<dbReference type="PhylomeDB" id="O77459"/>
<dbReference type="Reactome" id="R-DME-210671">
    <property type="pathway name" value="Transcriptional repression by nuclear factors"/>
</dbReference>
<dbReference type="BioGRID-ORCS" id="37785">
    <property type="hits" value="0 hits in 1 CRISPR screen"/>
</dbReference>
<dbReference type="GenomeRNAi" id="37785"/>
<dbReference type="PRO" id="PR:O77459"/>
<dbReference type="Proteomes" id="UP000000803">
    <property type="component" value="Chromosome 2R"/>
</dbReference>
<dbReference type="Bgee" id="FBgn0011236">
    <property type="expression patterns" value="Expressed in dorsal appendage forming follicle cell in ovary and 196 other cell types or tissues"/>
</dbReference>
<dbReference type="GO" id="GO:0005654">
    <property type="term" value="C:nucleoplasm"/>
    <property type="evidence" value="ECO:0000304"/>
    <property type="project" value="Reactome"/>
</dbReference>
<dbReference type="GO" id="GO:0005634">
    <property type="term" value="C:nucleus"/>
    <property type="evidence" value="ECO:0000314"/>
    <property type="project" value="UniProtKB"/>
</dbReference>
<dbReference type="GO" id="GO:0003677">
    <property type="term" value="F:DNA binding"/>
    <property type="evidence" value="ECO:0000315"/>
    <property type="project" value="UniProtKB"/>
</dbReference>
<dbReference type="GO" id="GO:0003700">
    <property type="term" value="F:DNA-binding transcription factor activity"/>
    <property type="evidence" value="ECO:0000315"/>
    <property type="project" value="UniProtKB"/>
</dbReference>
<dbReference type="GO" id="GO:0000978">
    <property type="term" value="F:RNA polymerase II cis-regulatory region sequence-specific DNA binding"/>
    <property type="evidence" value="ECO:0000318"/>
    <property type="project" value="GO_Central"/>
</dbReference>
<dbReference type="GO" id="GO:0008270">
    <property type="term" value="F:zinc ion binding"/>
    <property type="evidence" value="ECO:0007669"/>
    <property type="project" value="UniProtKB-KW"/>
</dbReference>
<dbReference type="GO" id="GO:0045497">
    <property type="term" value="P:female analia development"/>
    <property type="evidence" value="ECO:0000315"/>
    <property type="project" value="UniProtKB"/>
</dbReference>
<dbReference type="GO" id="GO:0030540">
    <property type="term" value="P:female genitalia development"/>
    <property type="evidence" value="ECO:0000315"/>
    <property type="project" value="UniProtKB"/>
</dbReference>
<dbReference type="GO" id="GO:0045496">
    <property type="term" value="P:male analia development"/>
    <property type="evidence" value="ECO:0000315"/>
    <property type="project" value="UniProtKB"/>
</dbReference>
<dbReference type="GO" id="GO:0030539">
    <property type="term" value="P:male genitalia development"/>
    <property type="evidence" value="ECO:0000315"/>
    <property type="project" value="UniProtKB"/>
</dbReference>
<dbReference type="GO" id="GO:0046426">
    <property type="term" value="P:negative regulation of receptor signaling pathway via JAK-STAT"/>
    <property type="evidence" value="ECO:0000315"/>
    <property type="project" value="FlyBase"/>
</dbReference>
<dbReference type="GO" id="GO:0006355">
    <property type="term" value="P:regulation of DNA-templated transcription"/>
    <property type="evidence" value="ECO:0000315"/>
    <property type="project" value="UniProtKB"/>
</dbReference>
<dbReference type="GO" id="GO:0006357">
    <property type="term" value="P:regulation of transcription by RNA polymerase II"/>
    <property type="evidence" value="ECO:0000318"/>
    <property type="project" value="GO_Central"/>
</dbReference>
<dbReference type="CDD" id="cd18315">
    <property type="entry name" value="BTB_POZ_BAB-like"/>
    <property type="match status" value="1"/>
</dbReference>
<dbReference type="FunFam" id="3.30.710.10:FF:000167">
    <property type="entry name" value="Transcription factor Ken"/>
    <property type="match status" value="1"/>
</dbReference>
<dbReference type="FunFam" id="3.30.160.60:FF:002034">
    <property type="entry name" value="transcription factor Ken"/>
    <property type="match status" value="1"/>
</dbReference>
<dbReference type="FunFam" id="3.30.160.60:FF:002059">
    <property type="entry name" value="transcription factor Ken"/>
    <property type="match status" value="1"/>
</dbReference>
<dbReference type="Gene3D" id="3.30.160.60">
    <property type="entry name" value="Classic Zinc Finger"/>
    <property type="match status" value="2"/>
</dbReference>
<dbReference type="Gene3D" id="3.30.710.10">
    <property type="entry name" value="Potassium Channel Kv1.1, Chain A"/>
    <property type="match status" value="1"/>
</dbReference>
<dbReference type="InterPro" id="IPR000210">
    <property type="entry name" value="BTB/POZ_dom"/>
</dbReference>
<dbReference type="InterPro" id="IPR051497">
    <property type="entry name" value="Dev/Hematopoietic_TF"/>
</dbReference>
<dbReference type="InterPro" id="IPR011333">
    <property type="entry name" value="SKP1/BTB/POZ_sf"/>
</dbReference>
<dbReference type="InterPro" id="IPR036236">
    <property type="entry name" value="Znf_C2H2_sf"/>
</dbReference>
<dbReference type="InterPro" id="IPR013087">
    <property type="entry name" value="Znf_C2H2_type"/>
</dbReference>
<dbReference type="PANTHER" id="PTHR45993">
    <property type="entry name" value="B-CELL LYMPHOMA/LEUKEMIA 11"/>
    <property type="match status" value="1"/>
</dbReference>
<dbReference type="PANTHER" id="PTHR45993:SF7">
    <property type="entry name" value="TRANSCRIPTION FACTOR KEN"/>
    <property type="match status" value="1"/>
</dbReference>
<dbReference type="Pfam" id="PF00651">
    <property type="entry name" value="BTB"/>
    <property type="match status" value="1"/>
</dbReference>
<dbReference type="SMART" id="SM00225">
    <property type="entry name" value="BTB"/>
    <property type="match status" value="1"/>
</dbReference>
<dbReference type="SMART" id="SM00355">
    <property type="entry name" value="ZnF_C2H2"/>
    <property type="match status" value="3"/>
</dbReference>
<dbReference type="SUPFAM" id="SSF57667">
    <property type="entry name" value="beta-beta-alpha zinc fingers"/>
    <property type="match status" value="1"/>
</dbReference>
<dbReference type="SUPFAM" id="SSF54695">
    <property type="entry name" value="POZ domain"/>
    <property type="match status" value="1"/>
</dbReference>
<dbReference type="PROSITE" id="PS50097">
    <property type="entry name" value="BTB"/>
    <property type="match status" value="1"/>
</dbReference>
<dbReference type="PROSITE" id="PS00028">
    <property type="entry name" value="ZINC_FINGER_C2H2_1"/>
    <property type="match status" value="3"/>
</dbReference>
<dbReference type="PROSITE" id="PS50157">
    <property type="entry name" value="ZINC_FINGER_C2H2_2"/>
    <property type="match status" value="2"/>
</dbReference>
<gene>
    <name type="primary">ken</name>
    <name type="ORF">CG5575</name>
</gene>
<reference key="1">
    <citation type="journal article" date="1998" name="Mech. Dev.">
        <title>A transcription unit at the ken and barbie gene locus encodes a novel Drosophila zinc finger protein.</title>
        <authorList>
            <person name="Kuehnlein R.P."/>
            <person name="Chen C.-K."/>
            <person name="Schuh R."/>
        </authorList>
    </citation>
    <scope>NUCLEOTIDE SEQUENCE [MRNA]</scope>
    <scope>TISSUE SPECIFICITY</scope>
    <scope>DEVELOPMENTAL STAGE</scope>
    <scope>DISRUPTION PHENOTYPE</scope>
</reference>
<reference key="2">
    <citation type="journal article" date="1999" name="Genomics">
        <title>The Drosophila melanogaster 60A chromosomal division is extremely dense with functional genes: their sequences, genomic organization, and expression.</title>
        <authorList>
            <person name="Lukacsovich T."/>
            <person name="Asztalos Z."/>
            <person name="Juni N."/>
            <person name="Awano W."/>
            <person name="Yamamoto D."/>
        </authorList>
    </citation>
    <scope>NUCLEOTIDE SEQUENCE [GENOMIC DNA / MRNA]</scope>
</reference>
<reference key="3">
    <citation type="journal article" date="2003" name="Arch. Insect Biochem. Physiol.">
        <title>The ken and barbie gene encoding a putative transcription factor with a BTB domain and three zinc finger motifs functions in terminalia development of Drosophila.</title>
        <authorList>
            <person name="Lukacsovich T."/>
            <person name="Yuge K."/>
            <person name="Awano W."/>
            <person name="Asztalos Z."/>
            <person name="Kondo S."/>
            <person name="Juni N."/>
            <person name="Yamamoto D."/>
        </authorList>
    </citation>
    <scope>NUCLEOTIDE SEQUENCE [GENOMIC DNA]</scope>
    <scope>FUNCTION</scope>
    <scope>TISSUE SPECIFICITY</scope>
    <scope>DEVELOPMENTAL STAGE</scope>
</reference>
<reference key="4">
    <citation type="journal article" date="2000" name="Science">
        <title>The genome sequence of Drosophila melanogaster.</title>
        <authorList>
            <person name="Adams M.D."/>
            <person name="Celniker S.E."/>
            <person name="Holt R.A."/>
            <person name="Evans C.A."/>
            <person name="Gocayne J.D."/>
            <person name="Amanatides P.G."/>
            <person name="Scherer S.E."/>
            <person name="Li P.W."/>
            <person name="Hoskins R.A."/>
            <person name="Galle R.F."/>
            <person name="George R.A."/>
            <person name="Lewis S.E."/>
            <person name="Richards S."/>
            <person name="Ashburner M."/>
            <person name="Henderson S.N."/>
            <person name="Sutton G.G."/>
            <person name="Wortman J.R."/>
            <person name="Yandell M.D."/>
            <person name="Zhang Q."/>
            <person name="Chen L.X."/>
            <person name="Brandon R.C."/>
            <person name="Rogers Y.-H.C."/>
            <person name="Blazej R.G."/>
            <person name="Champe M."/>
            <person name="Pfeiffer B.D."/>
            <person name="Wan K.H."/>
            <person name="Doyle C."/>
            <person name="Baxter E.G."/>
            <person name="Helt G."/>
            <person name="Nelson C.R."/>
            <person name="Miklos G.L.G."/>
            <person name="Abril J.F."/>
            <person name="Agbayani A."/>
            <person name="An H.-J."/>
            <person name="Andrews-Pfannkoch C."/>
            <person name="Baldwin D."/>
            <person name="Ballew R.M."/>
            <person name="Basu A."/>
            <person name="Baxendale J."/>
            <person name="Bayraktaroglu L."/>
            <person name="Beasley E.M."/>
            <person name="Beeson K.Y."/>
            <person name="Benos P.V."/>
            <person name="Berman B.P."/>
            <person name="Bhandari D."/>
            <person name="Bolshakov S."/>
            <person name="Borkova D."/>
            <person name="Botchan M.R."/>
            <person name="Bouck J."/>
            <person name="Brokstein P."/>
            <person name="Brottier P."/>
            <person name="Burtis K.C."/>
            <person name="Busam D.A."/>
            <person name="Butler H."/>
            <person name="Cadieu E."/>
            <person name="Center A."/>
            <person name="Chandra I."/>
            <person name="Cherry J.M."/>
            <person name="Cawley S."/>
            <person name="Dahlke C."/>
            <person name="Davenport L.B."/>
            <person name="Davies P."/>
            <person name="de Pablos B."/>
            <person name="Delcher A."/>
            <person name="Deng Z."/>
            <person name="Mays A.D."/>
            <person name="Dew I."/>
            <person name="Dietz S.M."/>
            <person name="Dodson K."/>
            <person name="Doup L.E."/>
            <person name="Downes M."/>
            <person name="Dugan-Rocha S."/>
            <person name="Dunkov B.C."/>
            <person name="Dunn P."/>
            <person name="Durbin K.J."/>
            <person name="Evangelista C.C."/>
            <person name="Ferraz C."/>
            <person name="Ferriera S."/>
            <person name="Fleischmann W."/>
            <person name="Fosler C."/>
            <person name="Gabrielian A.E."/>
            <person name="Garg N.S."/>
            <person name="Gelbart W.M."/>
            <person name="Glasser K."/>
            <person name="Glodek A."/>
            <person name="Gong F."/>
            <person name="Gorrell J.H."/>
            <person name="Gu Z."/>
            <person name="Guan P."/>
            <person name="Harris M."/>
            <person name="Harris N.L."/>
            <person name="Harvey D.A."/>
            <person name="Heiman T.J."/>
            <person name="Hernandez J.R."/>
            <person name="Houck J."/>
            <person name="Hostin D."/>
            <person name="Houston K.A."/>
            <person name="Howland T.J."/>
            <person name="Wei M.-H."/>
            <person name="Ibegwam C."/>
            <person name="Jalali M."/>
            <person name="Kalush F."/>
            <person name="Karpen G.H."/>
            <person name="Ke Z."/>
            <person name="Kennison J.A."/>
            <person name="Ketchum K.A."/>
            <person name="Kimmel B.E."/>
            <person name="Kodira C.D."/>
            <person name="Kraft C.L."/>
            <person name="Kravitz S."/>
            <person name="Kulp D."/>
            <person name="Lai Z."/>
            <person name="Lasko P."/>
            <person name="Lei Y."/>
            <person name="Levitsky A.A."/>
            <person name="Li J.H."/>
            <person name="Li Z."/>
            <person name="Liang Y."/>
            <person name="Lin X."/>
            <person name="Liu X."/>
            <person name="Mattei B."/>
            <person name="McIntosh T.C."/>
            <person name="McLeod M.P."/>
            <person name="McPherson D."/>
            <person name="Merkulov G."/>
            <person name="Milshina N.V."/>
            <person name="Mobarry C."/>
            <person name="Morris J."/>
            <person name="Moshrefi A."/>
            <person name="Mount S.M."/>
            <person name="Moy M."/>
            <person name="Murphy B."/>
            <person name="Murphy L."/>
            <person name="Muzny D.M."/>
            <person name="Nelson D.L."/>
            <person name="Nelson D.R."/>
            <person name="Nelson K.A."/>
            <person name="Nixon K."/>
            <person name="Nusskern D.R."/>
            <person name="Pacleb J.M."/>
            <person name="Palazzolo M."/>
            <person name="Pittman G.S."/>
            <person name="Pan S."/>
            <person name="Pollard J."/>
            <person name="Puri V."/>
            <person name="Reese M.G."/>
            <person name="Reinert K."/>
            <person name="Remington K."/>
            <person name="Saunders R.D.C."/>
            <person name="Scheeler F."/>
            <person name="Shen H."/>
            <person name="Shue B.C."/>
            <person name="Siden-Kiamos I."/>
            <person name="Simpson M."/>
            <person name="Skupski M.P."/>
            <person name="Smith T.J."/>
            <person name="Spier E."/>
            <person name="Spradling A.C."/>
            <person name="Stapleton M."/>
            <person name="Strong R."/>
            <person name="Sun E."/>
            <person name="Svirskas R."/>
            <person name="Tector C."/>
            <person name="Turner R."/>
            <person name="Venter E."/>
            <person name="Wang A.H."/>
            <person name="Wang X."/>
            <person name="Wang Z.-Y."/>
            <person name="Wassarman D.A."/>
            <person name="Weinstock G.M."/>
            <person name="Weissenbach J."/>
            <person name="Williams S.M."/>
            <person name="Woodage T."/>
            <person name="Worley K.C."/>
            <person name="Wu D."/>
            <person name="Yang S."/>
            <person name="Yao Q.A."/>
            <person name="Ye J."/>
            <person name="Yeh R.-F."/>
            <person name="Zaveri J.S."/>
            <person name="Zhan M."/>
            <person name="Zhang G."/>
            <person name="Zhao Q."/>
            <person name="Zheng L."/>
            <person name="Zheng X.H."/>
            <person name="Zhong F.N."/>
            <person name="Zhong W."/>
            <person name="Zhou X."/>
            <person name="Zhu S.C."/>
            <person name="Zhu X."/>
            <person name="Smith H.O."/>
            <person name="Gibbs R.A."/>
            <person name="Myers E.W."/>
            <person name="Rubin G.M."/>
            <person name="Venter J.C."/>
        </authorList>
    </citation>
    <scope>NUCLEOTIDE SEQUENCE [LARGE SCALE GENOMIC DNA]</scope>
    <source>
        <strain>Berkeley</strain>
    </source>
</reference>
<reference key="5">
    <citation type="journal article" date="2002" name="Genome Biol.">
        <title>Annotation of the Drosophila melanogaster euchromatic genome: a systematic review.</title>
        <authorList>
            <person name="Misra S."/>
            <person name="Crosby M.A."/>
            <person name="Mungall C.J."/>
            <person name="Matthews B.B."/>
            <person name="Campbell K.S."/>
            <person name="Hradecky P."/>
            <person name="Huang Y."/>
            <person name="Kaminker J.S."/>
            <person name="Millburn G.H."/>
            <person name="Prochnik S.E."/>
            <person name="Smith C.D."/>
            <person name="Tupy J.L."/>
            <person name="Whitfield E.J."/>
            <person name="Bayraktaroglu L."/>
            <person name="Berman B.P."/>
            <person name="Bettencourt B.R."/>
            <person name="Celniker S.E."/>
            <person name="de Grey A.D.N.J."/>
            <person name="Drysdale R.A."/>
            <person name="Harris N.L."/>
            <person name="Richter J."/>
            <person name="Russo S."/>
            <person name="Schroeder A.J."/>
            <person name="Shu S.Q."/>
            <person name="Stapleton M."/>
            <person name="Yamada C."/>
            <person name="Ashburner M."/>
            <person name="Gelbart W.M."/>
            <person name="Rubin G.M."/>
            <person name="Lewis S.E."/>
        </authorList>
    </citation>
    <scope>GENOME REANNOTATION</scope>
    <source>
        <strain>Berkeley</strain>
    </source>
</reference>
<reference key="6">
    <citation type="journal article" date="2002" name="Genome Biol.">
        <title>A Drosophila full-length cDNA resource.</title>
        <authorList>
            <person name="Stapleton M."/>
            <person name="Carlson J.W."/>
            <person name="Brokstein P."/>
            <person name="Yu C."/>
            <person name="Champe M."/>
            <person name="George R.A."/>
            <person name="Guarin H."/>
            <person name="Kronmiller B."/>
            <person name="Pacleb J.M."/>
            <person name="Park S."/>
            <person name="Wan K.H."/>
            <person name="Rubin G.M."/>
            <person name="Celniker S.E."/>
        </authorList>
    </citation>
    <scope>NUCLEOTIDE SEQUENCE [LARGE SCALE MRNA]</scope>
    <source>
        <strain>Berkeley</strain>
        <tissue>Head</tissue>
    </source>
</reference>
<reference key="7">
    <citation type="journal article" date="2006" name="Curr. Biol.">
        <title>Ken &amp; barbie selectively regulates the expression of a subset of Jak/STAT pathway target genes.</title>
        <authorList>
            <person name="Arbouzova N.I."/>
            <person name="Bach E.A."/>
            <person name="Zeidler M.P."/>
        </authorList>
    </citation>
    <scope>FUNCTION</scope>
    <scope>TISSUE SPECIFICITY</scope>
    <scope>DEVELOPMENTAL STAGE</scope>
</reference>
<accession>O77459</accession>
<sequence>MKEFQRMLMLQYSKHGECILKEIGAAFRGEHPADLTIVCENKVKLHAHKLVLAAASPLIRNLLEDTHLSDCSTTVYFPDVNATYFKFLLDFLYSGQTCITSRDVNYLHDLLLLLQIKSDSWKTTDSAYLSSKCGGLRDRADRRKQQYTSPQNLEPDQTLKYEVDSVDESRNAADFSSAFNSNDNCESAAECERSGGHNNKEEDEDDCTHKDNKSDKDTDEIVNLSNAPPSGTSGSNSNISTSSNHQQQQHHHHHHHNHNNNNNNNNNNSSSSTINPVNLSLDLRTKSENSASRTLGSGSDHSGIDLAVTASESTKRKGLFFDSHKDVMKPLSDGSDINSSPENYVVTPHRKRRPGFHNTQSDNQPFTSYPHSLLEELRLAKSTTSPISGFGSEKNMLAHLEDGALNGDTLTPDRKHLLEAQRNRAQSPEIPMHLGPQFVYQWQSNQNAAMSAMPNLQSRLSSLSHISLNLDHPEGRSGSASGSGANLAGSNTHASSVREYRCEYCGKQFGMSWNLKTHLRVHTGEKPFACRLCVAMFKQKAHLLKHLCSVHRNVITTTNGADTENRYSCCFCSMCFESVQELVRHLSGHHNNLLLTKNLRE</sequence>
<name>KEN_DROME</name>
<comment type="function">
    <text evidence="5 6">Transcription factor required for terminalia development. Negative regulator of the JAK/STAT pathway: represses JAK/STAT-dependent expression of ventral veins lacking (vvl) in the posterior spiracles.</text>
</comment>
<comment type="interaction">
    <interactant intactId="EBI-193057">
        <id>O77459</id>
    </interactant>
    <interactant intactId="EBI-84493">
        <id>Q7KRI2</id>
        <label>lolal</label>
    </interactant>
    <organismsDiffer>false</organismsDiffer>
    <experiments>2</experiments>
</comment>
<comment type="subcellular location">
    <subcellularLocation>
        <location evidence="7">Nucleus</location>
    </subcellularLocation>
</comment>
<comment type="tissue specificity">
    <text evidence="4 5 6">Expressed from stage 5 in two rather faint stripes at positions of 64% (anterior domain; AD) and 17% (posterior domain; PD) egg length. During early gastrulation, at stage 6, these two stripes become more evident and detectable at the region posterior to the cephalic furrow and in the hindgut primordium. The AD disappears as gastrulation proceeds, while the PD remains. At stage 15, the AD appears again in the foregut, and PD expression in the hindgut and anal pad. In imaginal disks, it is ubiquitously expressed in both males and females in genital and eye-antennal disks. Not expressed in the brain. In genital disks, it is expressed along the margin of the anterior bulbus in males, while in females it is expressed in the posterior compartment along the anterior-posterior border, with medial expansion in the most posterior region.</text>
</comment>
<comment type="developmental stage">
    <text evidence="4 5 6">Expressed both maternally and zygotically. Highly expressed in embryos and pupae, and at lower level in larvae. In adults, it is expressed at higher level in females.</text>
</comment>
<comment type="disruption phenotype">
    <text evidence="4">Flies show low mating success and reduced copulation duration. Men and female genitalia often remain inside the body, and genitalia and analia are missing in some homozygous flies. These flies are named after the famous dolls who also lack these 'features'.</text>
</comment>